<proteinExistence type="inferred from homology"/>
<reference key="1">
    <citation type="journal article" date="2002" name="Nat. Biotechnol.">
        <title>Genome sequence of the dissimilatory metal ion-reducing bacterium Shewanella oneidensis.</title>
        <authorList>
            <person name="Heidelberg J.F."/>
            <person name="Paulsen I.T."/>
            <person name="Nelson K.E."/>
            <person name="Gaidos E.J."/>
            <person name="Nelson W.C."/>
            <person name="Read T.D."/>
            <person name="Eisen J.A."/>
            <person name="Seshadri R."/>
            <person name="Ward N.L."/>
            <person name="Methe B.A."/>
            <person name="Clayton R.A."/>
            <person name="Meyer T."/>
            <person name="Tsapin A."/>
            <person name="Scott J."/>
            <person name="Beanan M.J."/>
            <person name="Brinkac L.M."/>
            <person name="Daugherty S.C."/>
            <person name="DeBoy R.T."/>
            <person name="Dodson R.J."/>
            <person name="Durkin A.S."/>
            <person name="Haft D.H."/>
            <person name="Kolonay J.F."/>
            <person name="Madupu R."/>
            <person name="Peterson J.D."/>
            <person name="Umayam L.A."/>
            <person name="White O."/>
            <person name="Wolf A.M."/>
            <person name="Vamathevan J.J."/>
            <person name="Weidman J.F."/>
            <person name="Impraim M."/>
            <person name="Lee K."/>
            <person name="Berry K.J."/>
            <person name="Lee C."/>
            <person name="Mueller J."/>
            <person name="Khouri H.M."/>
            <person name="Gill J."/>
            <person name="Utterback T.R."/>
            <person name="McDonald L.A."/>
            <person name="Feldblyum T.V."/>
            <person name="Smith H.O."/>
            <person name="Venter J.C."/>
            <person name="Nealson K.H."/>
            <person name="Fraser C.M."/>
        </authorList>
    </citation>
    <scope>NUCLEOTIDE SEQUENCE [LARGE SCALE GENOMIC DNA]</scope>
    <source>
        <strain>ATCC 700550 / JCM 31522 / CIP 106686 / LMG 19005 / NCIMB 14063 / MR-1</strain>
    </source>
</reference>
<accession>Q8EAH3</accession>
<name>PRIB_SHEON</name>
<feature type="chain" id="PRO_0000199062" description="Replication restart protein PriB">
    <location>
        <begin position="1"/>
        <end position="101"/>
    </location>
</feature>
<feature type="domain" description="SSB" evidence="1">
    <location>
        <begin position="1"/>
        <end position="101"/>
    </location>
</feature>
<protein>
    <recommendedName>
        <fullName evidence="1">Replication restart protein PriB</fullName>
    </recommendedName>
</protein>
<organism>
    <name type="scientific">Shewanella oneidensis (strain ATCC 700550 / JCM 31522 / CIP 106686 / LMG 19005 / NCIMB 14063 / MR-1)</name>
    <dbReference type="NCBI Taxonomy" id="211586"/>
    <lineage>
        <taxon>Bacteria</taxon>
        <taxon>Pseudomonadati</taxon>
        <taxon>Pseudomonadota</taxon>
        <taxon>Gammaproteobacteria</taxon>
        <taxon>Alteromonadales</taxon>
        <taxon>Shewanellaceae</taxon>
        <taxon>Shewanella</taxon>
    </lineage>
</organism>
<gene>
    <name evidence="1" type="primary">priB</name>
    <name type="ordered locus">SO_3929</name>
</gene>
<keyword id="KW-0235">DNA replication</keyword>
<keyword id="KW-0238">DNA-binding</keyword>
<keyword id="KW-0639">Primosome</keyword>
<keyword id="KW-1185">Reference proteome</keyword>
<sequence length="101" mass="11337">MTTNNLVLSGTITRSRRFKSPAGIAHSVIMLEHKSQRYEADMLRNVYVQIQVILSGPRFESVADNLKAGVEVQVQGFMTLQQGRNGQNRLVIHAENVELKT</sequence>
<dbReference type="EMBL" id="AE014299">
    <property type="protein sequence ID" value="AAN56904.1"/>
    <property type="molecule type" value="Genomic_DNA"/>
</dbReference>
<dbReference type="RefSeq" id="NP_719460.1">
    <property type="nucleotide sequence ID" value="NC_004347.2"/>
</dbReference>
<dbReference type="RefSeq" id="WP_011073673.1">
    <property type="nucleotide sequence ID" value="NZ_CP053946.1"/>
</dbReference>
<dbReference type="SMR" id="Q8EAH3"/>
<dbReference type="STRING" id="211586.SO_3929"/>
<dbReference type="PaxDb" id="211586-SO_3929"/>
<dbReference type="GeneID" id="94726692"/>
<dbReference type="KEGG" id="son:SO_3929"/>
<dbReference type="PATRIC" id="fig|211586.12.peg.3813"/>
<dbReference type="eggNOG" id="COG2965">
    <property type="taxonomic scope" value="Bacteria"/>
</dbReference>
<dbReference type="HOGENOM" id="CLU_166075_0_0_6"/>
<dbReference type="OrthoDB" id="9180733at2"/>
<dbReference type="PhylomeDB" id="Q8EAH3"/>
<dbReference type="BioCyc" id="SONE211586:G1GMP-3647-MONOMER"/>
<dbReference type="Proteomes" id="UP000008186">
    <property type="component" value="Chromosome"/>
</dbReference>
<dbReference type="GO" id="GO:1990077">
    <property type="term" value="C:primosome complex"/>
    <property type="evidence" value="ECO:0007669"/>
    <property type="project" value="UniProtKB-KW"/>
</dbReference>
<dbReference type="GO" id="GO:0003697">
    <property type="term" value="F:single-stranded DNA binding"/>
    <property type="evidence" value="ECO:0007669"/>
    <property type="project" value="UniProtKB-UniRule"/>
</dbReference>
<dbReference type="GO" id="GO:0006269">
    <property type="term" value="P:DNA replication, synthesis of primer"/>
    <property type="evidence" value="ECO:0007669"/>
    <property type="project" value="UniProtKB-KW"/>
</dbReference>
<dbReference type="FunFam" id="2.40.50.140:FF:000332">
    <property type="entry name" value="Primosomal replication protein N"/>
    <property type="match status" value="1"/>
</dbReference>
<dbReference type="Gene3D" id="2.40.50.140">
    <property type="entry name" value="Nucleic acid-binding proteins"/>
    <property type="match status" value="1"/>
</dbReference>
<dbReference type="HAMAP" id="MF_00720">
    <property type="entry name" value="PriB"/>
    <property type="match status" value="1"/>
</dbReference>
<dbReference type="InterPro" id="IPR012340">
    <property type="entry name" value="NA-bd_OB-fold"/>
</dbReference>
<dbReference type="InterPro" id="IPR000424">
    <property type="entry name" value="Primosome_PriB/ssb"/>
</dbReference>
<dbReference type="InterPro" id="IPR023646">
    <property type="entry name" value="Prisomal_replication_PriB"/>
</dbReference>
<dbReference type="NCBIfam" id="TIGR04418">
    <property type="entry name" value="PriB_gamma"/>
    <property type="match status" value="1"/>
</dbReference>
<dbReference type="Pfam" id="PF22657">
    <property type="entry name" value="SSB_1"/>
    <property type="match status" value="1"/>
</dbReference>
<dbReference type="PIRSF" id="PIRSF003135">
    <property type="entry name" value="Primosomal_n"/>
    <property type="match status" value="1"/>
</dbReference>
<dbReference type="SUPFAM" id="SSF50249">
    <property type="entry name" value="Nucleic acid-binding proteins"/>
    <property type="match status" value="1"/>
</dbReference>
<dbReference type="PROSITE" id="PS50935">
    <property type="entry name" value="SSB"/>
    <property type="match status" value="1"/>
</dbReference>
<comment type="function">
    <text evidence="1">Involved in the restart of stalled replication forks, which reloads the replicative helicase on sites other than the origin of replication; the PriA-PriB pathway is the major replication restart pathway. During primosome assembly it facilitates complex formation between PriA and DnaT on DNA; stabilizes PriA on DNA. Stimulates the DNA unwinding activity of PriA helicase.</text>
</comment>
<comment type="subunit">
    <text evidence="1">Homodimer. Interacts with PriA and DnaT. Component of the replication restart primosome. Primosome assembly occurs via a 'hand-off' mechanism. PriA binds to replication forks, subsequently PriB then DnaT bind; DnaT then displaces ssDNA to generate the helicase loading substrate.</text>
</comment>
<comment type="similarity">
    <text evidence="1">Belongs to the PriB family.</text>
</comment>
<evidence type="ECO:0000255" key="1">
    <source>
        <dbReference type="HAMAP-Rule" id="MF_00720"/>
    </source>
</evidence>